<evidence type="ECO:0000255" key="1">
    <source>
        <dbReference type="HAMAP-Rule" id="MF_00006"/>
    </source>
</evidence>
<dbReference type="EC" id="4.3.2.1" evidence="1"/>
<dbReference type="EMBL" id="CP000725">
    <property type="protein sequence ID" value="ABV09245.1"/>
    <property type="molecule type" value="Genomic_DNA"/>
</dbReference>
<dbReference type="RefSeq" id="WP_011999717.1">
    <property type="nucleotide sequence ID" value="NC_009785.1"/>
</dbReference>
<dbReference type="SMR" id="A8AUN7"/>
<dbReference type="STRING" id="467705.SGO_0176"/>
<dbReference type="KEGG" id="sgo:SGO_0176"/>
<dbReference type="eggNOG" id="COG0165">
    <property type="taxonomic scope" value="Bacteria"/>
</dbReference>
<dbReference type="HOGENOM" id="CLU_027272_2_3_9"/>
<dbReference type="UniPathway" id="UPA00068">
    <property type="reaction ID" value="UER00114"/>
</dbReference>
<dbReference type="Proteomes" id="UP000001131">
    <property type="component" value="Chromosome"/>
</dbReference>
<dbReference type="GO" id="GO:0005829">
    <property type="term" value="C:cytosol"/>
    <property type="evidence" value="ECO:0007669"/>
    <property type="project" value="TreeGrafter"/>
</dbReference>
<dbReference type="GO" id="GO:0004056">
    <property type="term" value="F:argininosuccinate lyase activity"/>
    <property type="evidence" value="ECO:0007669"/>
    <property type="project" value="UniProtKB-UniRule"/>
</dbReference>
<dbReference type="GO" id="GO:0042450">
    <property type="term" value="P:arginine biosynthetic process via ornithine"/>
    <property type="evidence" value="ECO:0007669"/>
    <property type="project" value="InterPro"/>
</dbReference>
<dbReference type="GO" id="GO:0006526">
    <property type="term" value="P:L-arginine biosynthetic process"/>
    <property type="evidence" value="ECO:0007669"/>
    <property type="project" value="UniProtKB-UniRule"/>
</dbReference>
<dbReference type="CDD" id="cd01359">
    <property type="entry name" value="Argininosuccinate_lyase"/>
    <property type="match status" value="1"/>
</dbReference>
<dbReference type="FunFam" id="1.10.275.10:FF:000002">
    <property type="entry name" value="Argininosuccinate lyase"/>
    <property type="match status" value="1"/>
</dbReference>
<dbReference type="FunFam" id="1.10.40.30:FF:000001">
    <property type="entry name" value="Argininosuccinate lyase"/>
    <property type="match status" value="1"/>
</dbReference>
<dbReference type="FunFam" id="1.20.200.10:FF:000002">
    <property type="entry name" value="Argininosuccinate lyase"/>
    <property type="match status" value="1"/>
</dbReference>
<dbReference type="Gene3D" id="1.10.40.30">
    <property type="entry name" value="Fumarase/aspartase (C-terminal domain)"/>
    <property type="match status" value="1"/>
</dbReference>
<dbReference type="Gene3D" id="1.20.200.10">
    <property type="entry name" value="Fumarase/aspartase (Central domain)"/>
    <property type="match status" value="1"/>
</dbReference>
<dbReference type="Gene3D" id="1.10.275.10">
    <property type="entry name" value="Fumarase/aspartase (N-terminal domain)"/>
    <property type="match status" value="1"/>
</dbReference>
<dbReference type="HAMAP" id="MF_00006">
    <property type="entry name" value="Arg_succ_lyase"/>
    <property type="match status" value="1"/>
</dbReference>
<dbReference type="InterPro" id="IPR029419">
    <property type="entry name" value="Arg_succ_lyase_C"/>
</dbReference>
<dbReference type="InterPro" id="IPR009049">
    <property type="entry name" value="Argininosuccinate_lyase"/>
</dbReference>
<dbReference type="InterPro" id="IPR024083">
    <property type="entry name" value="Fumarase/histidase_N"/>
</dbReference>
<dbReference type="InterPro" id="IPR020557">
    <property type="entry name" value="Fumarate_lyase_CS"/>
</dbReference>
<dbReference type="InterPro" id="IPR000362">
    <property type="entry name" value="Fumarate_lyase_fam"/>
</dbReference>
<dbReference type="InterPro" id="IPR022761">
    <property type="entry name" value="Fumarate_lyase_N"/>
</dbReference>
<dbReference type="InterPro" id="IPR008948">
    <property type="entry name" value="L-Aspartase-like"/>
</dbReference>
<dbReference type="NCBIfam" id="TIGR00838">
    <property type="entry name" value="argH"/>
    <property type="match status" value="1"/>
</dbReference>
<dbReference type="PANTHER" id="PTHR43814">
    <property type="entry name" value="ARGININOSUCCINATE LYASE"/>
    <property type="match status" value="1"/>
</dbReference>
<dbReference type="PANTHER" id="PTHR43814:SF1">
    <property type="entry name" value="ARGININOSUCCINATE LYASE"/>
    <property type="match status" value="1"/>
</dbReference>
<dbReference type="Pfam" id="PF14698">
    <property type="entry name" value="ASL_C2"/>
    <property type="match status" value="1"/>
</dbReference>
<dbReference type="Pfam" id="PF00206">
    <property type="entry name" value="Lyase_1"/>
    <property type="match status" value="1"/>
</dbReference>
<dbReference type="PRINTS" id="PR00145">
    <property type="entry name" value="ARGSUCLYASE"/>
</dbReference>
<dbReference type="PRINTS" id="PR00149">
    <property type="entry name" value="FUMRATELYASE"/>
</dbReference>
<dbReference type="SUPFAM" id="SSF48557">
    <property type="entry name" value="L-aspartase-like"/>
    <property type="match status" value="1"/>
</dbReference>
<dbReference type="PROSITE" id="PS00163">
    <property type="entry name" value="FUMARATE_LYASES"/>
    <property type="match status" value="1"/>
</dbReference>
<gene>
    <name evidence="1" type="primary">argH</name>
    <name type="ordered locus">SGO_0176</name>
</gene>
<keyword id="KW-0028">Amino-acid biosynthesis</keyword>
<keyword id="KW-0055">Arginine biosynthesis</keyword>
<keyword id="KW-0963">Cytoplasm</keyword>
<keyword id="KW-0456">Lyase</keyword>
<keyword id="KW-1185">Reference proteome</keyword>
<comment type="catalytic activity">
    <reaction evidence="1">
        <text>2-(N(omega)-L-arginino)succinate = fumarate + L-arginine</text>
        <dbReference type="Rhea" id="RHEA:24020"/>
        <dbReference type="ChEBI" id="CHEBI:29806"/>
        <dbReference type="ChEBI" id="CHEBI:32682"/>
        <dbReference type="ChEBI" id="CHEBI:57472"/>
        <dbReference type="EC" id="4.3.2.1"/>
    </reaction>
</comment>
<comment type="pathway">
    <text evidence="1">Amino-acid biosynthesis; L-arginine biosynthesis; L-arginine from L-ornithine and carbamoyl phosphate: step 3/3.</text>
</comment>
<comment type="subcellular location">
    <subcellularLocation>
        <location evidence="1">Cytoplasm</location>
    </subcellularLocation>
</comment>
<comment type="similarity">
    <text evidence="1">Belongs to the lyase 1 family. Argininosuccinate lyase subfamily.</text>
</comment>
<feature type="chain" id="PRO_1000073864" description="Argininosuccinate lyase">
    <location>
        <begin position="1"/>
        <end position="461"/>
    </location>
</feature>
<organism>
    <name type="scientific">Streptococcus gordonii (strain Challis / ATCC 35105 / BCRC 15272 / CH1 / DL1 / V288)</name>
    <dbReference type="NCBI Taxonomy" id="467705"/>
    <lineage>
        <taxon>Bacteria</taxon>
        <taxon>Bacillati</taxon>
        <taxon>Bacillota</taxon>
        <taxon>Bacilli</taxon>
        <taxon>Lactobacillales</taxon>
        <taxon>Streptococcaceae</taxon>
        <taxon>Streptococcus</taxon>
    </lineage>
</organism>
<sequence length="461" mass="51747">MANHKLWGGRFEASLEGWVEEFGASIGFDYRLAPYDLEGSLAHVKMLGQTGIIAPEEAAAIQAGLEKLLARYESGELEFDVRNEDIHMNMEALLTEKIGPVAGKLHTARSRNDQVATDMHLYLKDQLGQIADKLLNLRQVLLDLAEEHVETIMPGYTHLQHAQPISFAHHLLAYYQMFSRDSQRFAFNLEHTDLSPLGAAALAGTTFPIDRELTADLLGFKGIYHNSLDAVSDRDFILEFLSNSSILIMHLSRLCEELINWCSYEYGFVSLSDTFSTGSSIMPQKKNPDMAELIRGKSGRVYGHLFSLLTVMKSLPLAYNKDLQEDKEGMFDTVDTIQKSLDIMAGILSSMTVNKEKMLVSTQQDFSNATELADYLAKKGLPFREAHEIVGKLVLECSKAGYYLQDIPLSRYQEVSSLIEEDVYQALESQTAVQKRNSLGGTGFEQIRQELERAKKDLNNK</sequence>
<accession>A8AUN7</accession>
<proteinExistence type="inferred from homology"/>
<name>ARLY_STRGC</name>
<protein>
    <recommendedName>
        <fullName evidence="1">Argininosuccinate lyase</fullName>
        <shortName evidence="1">ASAL</shortName>
        <ecNumber evidence="1">4.3.2.1</ecNumber>
    </recommendedName>
    <alternativeName>
        <fullName evidence="1">Arginosuccinase</fullName>
    </alternativeName>
</protein>
<reference key="1">
    <citation type="journal article" date="2007" name="J. Bacteriol.">
        <title>Genome-wide transcriptional changes in Streptococcus gordonii in response to competence signaling peptide.</title>
        <authorList>
            <person name="Vickerman M.M."/>
            <person name="Iobst S."/>
            <person name="Jesionowski A.M."/>
            <person name="Gill S.R."/>
        </authorList>
    </citation>
    <scope>NUCLEOTIDE SEQUENCE [LARGE SCALE GENOMIC DNA]</scope>
    <source>
        <strain>Challis / ATCC 35105 / BCRC 15272 / CH1 / DL1 / V288</strain>
    </source>
</reference>